<proteinExistence type="inferred from homology"/>
<comment type="function">
    <text evidence="1">Catalyzes the condensation of (S)-aspartate-beta-semialdehyde [(S)-ASA] and pyruvate to 4-hydroxy-tetrahydrodipicolinate (HTPA).</text>
</comment>
<comment type="catalytic activity">
    <reaction evidence="1">
        <text>L-aspartate 4-semialdehyde + pyruvate = (2S,4S)-4-hydroxy-2,3,4,5-tetrahydrodipicolinate + H2O + H(+)</text>
        <dbReference type="Rhea" id="RHEA:34171"/>
        <dbReference type="ChEBI" id="CHEBI:15361"/>
        <dbReference type="ChEBI" id="CHEBI:15377"/>
        <dbReference type="ChEBI" id="CHEBI:15378"/>
        <dbReference type="ChEBI" id="CHEBI:67139"/>
        <dbReference type="ChEBI" id="CHEBI:537519"/>
        <dbReference type="EC" id="4.3.3.7"/>
    </reaction>
</comment>
<comment type="pathway">
    <text evidence="1">Amino-acid biosynthesis; L-lysine biosynthesis via DAP pathway; (S)-tetrahydrodipicolinate from L-aspartate: step 3/4.</text>
</comment>
<comment type="subunit">
    <text evidence="1">Homotetramer; dimer of dimers.</text>
</comment>
<comment type="subcellular location">
    <subcellularLocation>
        <location evidence="1">Cytoplasm</location>
    </subcellularLocation>
</comment>
<comment type="similarity">
    <text evidence="1">Belongs to the DapA family.</text>
</comment>
<comment type="caution">
    <text evidence="2">Was originally thought to be a dihydrodipicolinate synthase (DHDPS), catalyzing the condensation of (S)-aspartate-beta-semialdehyde [(S)-ASA] and pyruvate to dihydrodipicolinate (DHDP). However, it was shown in E.coli that the product of the enzymatic reaction is not dihydrodipicolinate but in fact (4S)-4-hydroxy-2,3,4,5-tetrahydro-(2S)-dipicolinic acid (HTPA), and that the consecutive dehydration reaction leading to DHDP is not spontaneous but catalyzed by DapB.</text>
</comment>
<name>DAPA_RICCN</name>
<accession>Q92I25</accession>
<protein>
    <recommendedName>
        <fullName evidence="1">4-hydroxy-tetrahydrodipicolinate synthase</fullName>
        <shortName evidence="1">HTPA synthase</shortName>
        <ecNumber evidence="1">4.3.3.7</ecNumber>
    </recommendedName>
</protein>
<reference key="1">
    <citation type="journal article" date="2001" name="Science">
        <title>Mechanisms of evolution in Rickettsia conorii and R. prowazekii.</title>
        <authorList>
            <person name="Ogata H."/>
            <person name="Audic S."/>
            <person name="Renesto-Audiffren P."/>
            <person name="Fournier P.-E."/>
            <person name="Barbe V."/>
            <person name="Samson D."/>
            <person name="Roux V."/>
            <person name="Cossart P."/>
            <person name="Weissenbach J."/>
            <person name="Claverie J.-M."/>
            <person name="Raoult D."/>
        </authorList>
    </citation>
    <scope>NUCLEOTIDE SEQUENCE [LARGE SCALE GENOMIC DNA]</scope>
    <source>
        <strain>ATCC VR-613 / Malish 7</strain>
    </source>
</reference>
<evidence type="ECO:0000255" key="1">
    <source>
        <dbReference type="HAMAP-Rule" id="MF_00418"/>
    </source>
</evidence>
<evidence type="ECO:0000305" key="2"/>
<feature type="chain" id="PRO_0000103143" description="4-hydroxy-tetrahydrodipicolinate synthase">
    <location>
        <begin position="1"/>
        <end position="294"/>
    </location>
</feature>
<feature type="active site" description="Proton donor/acceptor" evidence="1">
    <location>
        <position position="135"/>
    </location>
</feature>
<feature type="active site" description="Schiff-base intermediate with substrate" evidence="1">
    <location>
        <position position="163"/>
    </location>
</feature>
<feature type="binding site" evidence="1">
    <location>
        <position position="47"/>
    </location>
    <ligand>
        <name>pyruvate</name>
        <dbReference type="ChEBI" id="CHEBI:15361"/>
    </ligand>
</feature>
<feature type="binding site" evidence="1">
    <location>
        <position position="205"/>
    </location>
    <ligand>
        <name>pyruvate</name>
        <dbReference type="ChEBI" id="CHEBI:15361"/>
    </ligand>
</feature>
<feature type="site" description="Part of a proton relay during catalysis" evidence="1">
    <location>
        <position position="46"/>
    </location>
</feature>
<feature type="site" description="Part of a proton relay during catalysis" evidence="1">
    <location>
        <position position="109"/>
    </location>
</feature>
<gene>
    <name evidence="1" type="primary">dapA</name>
    <name type="ordered locus">RC0595</name>
</gene>
<dbReference type="EC" id="4.3.3.7" evidence="1"/>
<dbReference type="EMBL" id="AE006914">
    <property type="protein sequence ID" value="AAL03133.1"/>
    <property type="molecule type" value="Genomic_DNA"/>
</dbReference>
<dbReference type="PIR" id="C97774">
    <property type="entry name" value="C97774"/>
</dbReference>
<dbReference type="RefSeq" id="WP_004995750.1">
    <property type="nucleotide sequence ID" value="NC_003103.1"/>
</dbReference>
<dbReference type="SMR" id="Q92I25"/>
<dbReference type="GeneID" id="95362215"/>
<dbReference type="KEGG" id="rco:RC0595"/>
<dbReference type="HOGENOM" id="CLU_049343_7_1_5"/>
<dbReference type="UniPathway" id="UPA00034">
    <property type="reaction ID" value="UER00017"/>
</dbReference>
<dbReference type="Proteomes" id="UP000000816">
    <property type="component" value="Chromosome"/>
</dbReference>
<dbReference type="GO" id="GO:0005737">
    <property type="term" value="C:cytoplasm"/>
    <property type="evidence" value="ECO:0007669"/>
    <property type="project" value="UniProtKB-SubCell"/>
</dbReference>
<dbReference type="GO" id="GO:0008700">
    <property type="term" value="F:(R,S)-4-hydroxy-2-oxoglutarate aldolase activity"/>
    <property type="evidence" value="ECO:0007669"/>
    <property type="project" value="TreeGrafter"/>
</dbReference>
<dbReference type="GO" id="GO:0008840">
    <property type="term" value="F:4-hydroxy-tetrahydrodipicolinate synthase activity"/>
    <property type="evidence" value="ECO:0007669"/>
    <property type="project" value="UniProtKB-UniRule"/>
</dbReference>
<dbReference type="GO" id="GO:0019877">
    <property type="term" value="P:diaminopimelate biosynthetic process"/>
    <property type="evidence" value="ECO:0007669"/>
    <property type="project" value="UniProtKB-UniRule"/>
</dbReference>
<dbReference type="GO" id="GO:0009436">
    <property type="term" value="P:glyoxylate catabolic process"/>
    <property type="evidence" value="ECO:0007669"/>
    <property type="project" value="TreeGrafter"/>
</dbReference>
<dbReference type="GO" id="GO:0009089">
    <property type="term" value="P:lysine biosynthetic process via diaminopimelate"/>
    <property type="evidence" value="ECO:0007669"/>
    <property type="project" value="UniProtKB-UniRule"/>
</dbReference>
<dbReference type="CDD" id="cd00950">
    <property type="entry name" value="DHDPS"/>
    <property type="match status" value="1"/>
</dbReference>
<dbReference type="Gene3D" id="3.20.20.70">
    <property type="entry name" value="Aldolase class I"/>
    <property type="match status" value="1"/>
</dbReference>
<dbReference type="HAMAP" id="MF_00418">
    <property type="entry name" value="DapA"/>
    <property type="match status" value="1"/>
</dbReference>
<dbReference type="InterPro" id="IPR013785">
    <property type="entry name" value="Aldolase_TIM"/>
</dbReference>
<dbReference type="InterPro" id="IPR005263">
    <property type="entry name" value="DapA"/>
</dbReference>
<dbReference type="InterPro" id="IPR002220">
    <property type="entry name" value="DapA-like"/>
</dbReference>
<dbReference type="InterPro" id="IPR020625">
    <property type="entry name" value="Schiff_base-form_aldolases_AS"/>
</dbReference>
<dbReference type="InterPro" id="IPR020624">
    <property type="entry name" value="Schiff_base-form_aldolases_CS"/>
</dbReference>
<dbReference type="NCBIfam" id="TIGR00674">
    <property type="entry name" value="dapA"/>
    <property type="match status" value="1"/>
</dbReference>
<dbReference type="PANTHER" id="PTHR12128:SF66">
    <property type="entry name" value="4-HYDROXY-2-OXOGLUTARATE ALDOLASE, MITOCHONDRIAL"/>
    <property type="match status" value="1"/>
</dbReference>
<dbReference type="PANTHER" id="PTHR12128">
    <property type="entry name" value="DIHYDRODIPICOLINATE SYNTHASE"/>
    <property type="match status" value="1"/>
</dbReference>
<dbReference type="Pfam" id="PF00701">
    <property type="entry name" value="DHDPS"/>
    <property type="match status" value="1"/>
</dbReference>
<dbReference type="PIRSF" id="PIRSF001365">
    <property type="entry name" value="DHDPS"/>
    <property type="match status" value="1"/>
</dbReference>
<dbReference type="PRINTS" id="PR00146">
    <property type="entry name" value="DHPICSNTHASE"/>
</dbReference>
<dbReference type="SMART" id="SM01130">
    <property type="entry name" value="DHDPS"/>
    <property type="match status" value="1"/>
</dbReference>
<dbReference type="SUPFAM" id="SSF51569">
    <property type="entry name" value="Aldolase"/>
    <property type="match status" value="1"/>
</dbReference>
<dbReference type="PROSITE" id="PS00665">
    <property type="entry name" value="DHDPS_1"/>
    <property type="match status" value="1"/>
</dbReference>
<dbReference type="PROSITE" id="PS00666">
    <property type="entry name" value="DHDPS_2"/>
    <property type="match status" value="1"/>
</dbReference>
<sequence>MHNIFKGLITALITPFKDNKLDLYALERIVKHQIKHEVDAVLIAGSTGESSSLSFEEYKLLLQTSVEIVNKCIPIISGCSSNNTTYARALAAESTKIGVDGFMASPPSYVKPTQHGIYKHFEALHEACNLPIMLYSAPTRSGVDFSDETILRLSKLPRILALKDCGVDLERPLRIRATVKKDFNILTGNDEVVLAFNAQGGVGWTSVASNIVPNICKELLEKWNKNDTKGALEIHQKLLPLYTALFVESNPIPIKYAAHYLGLCENEIRPPLTEASDSAKKQIENIITSLSIKI</sequence>
<keyword id="KW-0028">Amino-acid biosynthesis</keyword>
<keyword id="KW-0963">Cytoplasm</keyword>
<keyword id="KW-0220">Diaminopimelate biosynthesis</keyword>
<keyword id="KW-0456">Lyase</keyword>
<keyword id="KW-0457">Lysine biosynthesis</keyword>
<keyword id="KW-0704">Schiff base</keyword>
<organism>
    <name type="scientific">Rickettsia conorii (strain ATCC VR-613 / Malish 7)</name>
    <dbReference type="NCBI Taxonomy" id="272944"/>
    <lineage>
        <taxon>Bacteria</taxon>
        <taxon>Pseudomonadati</taxon>
        <taxon>Pseudomonadota</taxon>
        <taxon>Alphaproteobacteria</taxon>
        <taxon>Rickettsiales</taxon>
        <taxon>Rickettsiaceae</taxon>
        <taxon>Rickettsieae</taxon>
        <taxon>Rickettsia</taxon>
        <taxon>spotted fever group</taxon>
    </lineage>
</organism>